<reference key="1">
    <citation type="journal article" date="1993" name="Mol. Microbiol.">
        <title>Phospholipid substitution of capsular polysaccharides and mechanisms of capsule formation in Neisseria meningitidis.</title>
        <authorList>
            <person name="Frosch M."/>
            <person name="Mueller A."/>
        </authorList>
    </citation>
    <scope>NUCLEOTIDE SEQUENCE [GENOMIC DNA]</scope>
    <source>
        <strain>B1940 / Serogroup B</strain>
    </source>
</reference>
<reference key="2">
    <citation type="journal article" date="2000" name="Science">
        <title>Complete genome sequence of Neisseria meningitidis serogroup B strain MC58.</title>
        <authorList>
            <person name="Tettelin H."/>
            <person name="Saunders N.J."/>
            <person name="Heidelberg J.F."/>
            <person name="Jeffries A.C."/>
            <person name="Nelson K.E."/>
            <person name="Eisen J.A."/>
            <person name="Ketchum K.A."/>
            <person name="Hood D.W."/>
            <person name="Peden J.F."/>
            <person name="Dodson R.J."/>
            <person name="Nelson W.C."/>
            <person name="Gwinn M.L."/>
            <person name="DeBoy R.T."/>
            <person name="Peterson J.D."/>
            <person name="Hickey E.K."/>
            <person name="Haft D.H."/>
            <person name="Salzberg S.L."/>
            <person name="White O."/>
            <person name="Fleischmann R.D."/>
            <person name="Dougherty B.A."/>
            <person name="Mason T.M."/>
            <person name="Ciecko A."/>
            <person name="Parksey D.S."/>
            <person name="Blair E."/>
            <person name="Cittone H."/>
            <person name="Clark E.B."/>
            <person name="Cotton M.D."/>
            <person name="Utterback T.R."/>
            <person name="Khouri H.M."/>
            <person name="Qin H."/>
            <person name="Vamathevan J.J."/>
            <person name="Gill J."/>
            <person name="Scarlato V."/>
            <person name="Masignani V."/>
            <person name="Pizza M."/>
            <person name="Grandi G."/>
            <person name="Sun L."/>
            <person name="Smith H.O."/>
            <person name="Fraser C.M."/>
            <person name="Moxon E.R."/>
            <person name="Rappuoli R."/>
            <person name="Venter J.C."/>
        </authorList>
    </citation>
    <scope>NUCLEOTIDE SEQUENCE [LARGE SCALE GENOMIC DNA]</scope>
    <source>
        <strain>ATCC BAA-335 / MC58</strain>
    </source>
</reference>
<dbReference type="EMBL" id="Z13995">
    <property type="status" value="NOT_ANNOTATED_CDS"/>
    <property type="molecule type" value="Genomic_DNA"/>
</dbReference>
<dbReference type="EMBL" id="AE002098">
    <property type="protein sequence ID" value="AAF40547.1"/>
    <property type="molecule type" value="Genomic_DNA"/>
</dbReference>
<dbReference type="PIR" id="E81240">
    <property type="entry name" value="E81240"/>
</dbReference>
<dbReference type="RefSeq" id="NP_273146.1">
    <property type="nucleotide sequence ID" value="NC_003112.2"/>
</dbReference>
<dbReference type="RefSeq" id="WP_002223278.1">
    <property type="nucleotide sequence ID" value="NC_003112.2"/>
</dbReference>
<dbReference type="SMR" id="Q05014"/>
<dbReference type="STRING" id="122586.NMB0083"/>
<dbReference type="PaxDb" id="122586-NMB0083"/>
<dbReference type="KEGG" id="nme:NMB0083"/>
<dbReference type="PATRIC" id="fig|122586.8.peg.118"/>
<dbReference type="HOGENOM" id="CLU_040135_1_0_4"/>
<dbReference type="InParanoid" id="Q05014"/>
<dbReference type="OrthoDB" id="9794206at2"/>
<dbReference type="Proteomes" id="UP000000425">
    <property type="component" value="Chromosome"/>
</dbReference>
<dbReference type="GO" id="GO:0005886">
    <property type="term" value="C:plasma membrane"/>
    <property type="evidence" value="ECO:0007669"/>
    <property type="project" value="UniProtKB-SubCell"/>
</dbReference>
<dbReference type="GO" id="GO:0000271">
    <property type="term" value="P:polysaccharide biosynthetic process"/>
    <property type="evidence" value="ECO:0007669"/>
    <property type="project" value="InterPro"/>
</dbReference>
<dbReference type="GO" id="GO:0015774">
    <property type="term" value="P:polysaccharide transport"/>
    <property type="evidence" value="ECO:0007669"/>
    <property type="project" value="UniProtKB-KW"/>
</dbReference>
<dbReference type="CDD" id="cd16441">
    <property type="entry name" value="beta_Kdo_transferase_KpsS"/>
    <property type="match status" value="1"/>
</dbReference>
<dbReference type="InterPro" id="IPR007833">
    <property type="entry name" value="Capsule_polysaccharide_synth"/>
</dbReference>
<dbReference type="Pfam" id="PF05159">
    <property type="entry name" value="Capsule_synth"/>
    <property type="match status" value="1"/>
</dbReference>
<protein>
    <recommendedName>
        <fullName>Capsule polysaccharide modification protein LipB</fullName>
    </recommendedName>
</protein>
<accession>Q05014</accession>
<comment type="function">
    <text>Involved in the phospholipid modification of the capsular polysaccharide, a strong requirement for its translocation to the cell surface.</text>
</comment>
<comment type="subcellular location">
    <subcellularLocation>
        <location evidence="1">Cell inner membrane</location>
        <topology evidence="1">Peripheral membrane protein</topology>
        <orientation evidence="1">Cytoplasmic side</orientation>
    </subcellularLocation>
</comment>
<name>LPB1_NEIMB</name>
<organism>
    <name type="scientific">Neisseria meningitidis serogroup B (strain ATCC BAA-335 / MC58)</name>
    <dbReference type="NCBI Taxonomy" id="122586"/>
    <lineage>
        <taxon>Bacteria</taxon>
        <taxon>Pseudomonadati</taxon>
        <taxon>Pseudomonadota</taxon>
        <taxon>Betaproteobacteria</taxon>
        <taxon>Neisseriales</taxon>
        <taxon>Neisseriaceae</taxon>
        <taxon>Neisseria</taxon>
    </lineage>
</organism>
<gene>
    <name type="primary">lipB</name>
    <name type="ordered locus">NMB0083</name>
</gene>
<keyword id="KW-0997">Cell inner membrane</keyword>
<keyword id="KW-1003">Cell membrane</keyword>
<keyword id="KW-0472">Membrane</keyword>
<keyword id="KW-0625">Polysaccharide transport</keyword>
<keyword id="KW-1185">Reference proteome</keyword>
<keyword id="KW-0762">Sugar transport</keyword>
<keyword id="KW-0813">Transport</keyword>
<sequence>MKQTVLKNNLQNLLESAENILLLQGPVGDFFLRLADWLTANGKTVHKFNFNAGDDYFYPPTQAHTVVFNDNYDAFPEFLQEYITQHHIQAVVCFGDTRPYHVIAKRIANENQASFWAFEEGYFRPYYITLEKDGVNAFSPLPRRADFFLEQFPKLAQQEYKAPTPVHGGFTPMAKNAIRYYIELFRNPRKYPDYIHHRAPNAGHYLKPWSLSILKRLNYYIEDIQIAKRVEAGKYGKFFIVPLQVFNDSQVRIHCDFPSVRSFLLHVLSSFAEHAPADTNIIIKHHPMDRGFIDYWRDIKRFIKEHPELKGRVIYVHDVPLPVFLRHGLGMVTINSTSGLSGLIHNMPVKVLGRAYYDIPGITDQNTLAEFWNHPTPPDKELFHAYRMYHLNVTQINGNFYSQVFFPNKKTSNSSTPVI</sequence>
<proteinExistence type="predicted"/>
<evidence type="ECO:0000305" key="1"/>
<feature type="chain" id="PRO_0000084464" description="Capsule polysaccharide modification protein LipB">
    <location>
        <begin position="1"/>
        <end position="419"/>
    </location>
</feature>
<feature type="sequence conflict" description="In Ref. 1." evidence="1" ref="1">
    <original>K</original>
    <variation>N</variation>
    <location>
        <position position="410"/>
    </location>
</feature>
<feature type="sequence conflict" description="In Ref. 1." evidence="1" ref="1">
    <original>N</original>
    <variation>D</variation>
    <location>
        <position position="413"/>
    </location>
</feature>
<feature type="sequence conflict" description="In Ref. 1." evidence="1" ref="1">
    <original>VI</original>
    <variation>TT</variation>
    <location>
        <begin position="418"/>
        <end position="419"/>
    </location>
</feature>